<evidence type="ECO:0000250" key="1">
    <source>
        <dbReference type="UniProtKB" id="P34914"/>
    </source>
</evidence>
<evidence type="ECO:0000255" key="2"/>
<evidence type="ECO:0000269" key="3">
    <source>
    </source>
</evidence>
<evidence type="ECO:0000303" key="4">
    <source>
    </source>
</evidence>
<evidence type="ECO:0000305" key="5"/>
<evidence type="ECO:0000305" key="6">
    <source>
    </source>
</evidence>
<evidence type="ECO:0000312" key="7">
    <source>
        <dbReference type="EMBL" id="ABV45408.1"/>
    </source>
</evidence>
<evidence type="ECO:0000312" key="8">
    <source>
        <dbReference type="Proteomes" id="UP000001940"/>
    </source>
</evidence>
<evidence type="ECO:0000312" key="9">
    <source>
        <dbReference type="WormBase" id="K02F3.6"/>
    </source>
</evidence>
<comment type="function">
    <text evidence="3">Catalyzes the hydrolysis of epoxide-containing fatty acids. Active against epoxyeicosatrienoic acids (EETs) including 8,9-epoxy-(5Z,11Z,14Z)-eicosatrienoate (8,9-EET), 11,12-epoxy-(5Z,8Z,14Z)-eicosatrienoate (11,12-EET) and 14,15-epoxy-(5Z,8Z,11Z)-eicosatrienoate (14,15-EET) and the linoleic acid metabolites 12,13-epoxy-(9Z)-octadecenoate (12,13-EpOME) and 9,10-epoxy-(12Z)-octadecenoate (9,10-EpOME). These epoxides function as lipid signaling molecules, the enzyme can deplete the supply of the epoxide signal by transforming them into diol species that are more readily eliminated through excretion.</text>
</comment>
<comment type="catalytic activity">
    <reaction evidence="3">
        <text>an epoxide + H2O = an ethanediol</text>
        <dbReference type="Rhea" id="RHEA:19037"/>
        <dbReference type="ChEBI" id="CHEBI:15377"/>
        <dbReference type="ChEBI" id="CHEBI:32955"/>
        <dbReference type="ChEBI" id="CHEBI:140594"/>
        <dbReference type="EC" id="3.3.2.10"/>
    </reaction>
    <physiologicalReaction direction="left-to-right" evidence="6">
        <dbReference type="Rhea" id="RHEA:19038"/>
    </physiologicalReaction>
</comment>
<comment type="catalytic activity">
    <reaction evidence="3">
        <text>8,9-epoxy-(5Z,11Z,14Z)-eicosatrienoate + H2O = 8,9-dihydroxy-(5Z,11Z,14Z)-eicosatrienoate</text>
        <dbReference type="Rhea" id="RHEA:44048"/>
        <dbReference type="ChEBI" id="CHEBI:15377"/>
        <dbReference type="ChEBI" id="CHEBI:84025"/>
        <dbReference type="ChEBI" id="CHEBI:84032"/>
    </reaction>
    <physiologicalReaction direction="left-to-right" evidence="6">
        <dbReference type="Rhea" id="RHEA:44049"/>
    </physiologicalReaction>
</comment>
<comment type="catalytic activity">
    <reaction evidence="3">
        <text>11,12-epoxy-(5Z,8Z,14Z)-eicosatrienoate + H2O = 11,12-dihydroxy-(5Z,8Z,14Z)-eicosatrienoate</text>
        <dbReference type="Rhea" id="RHEA:44044"/>
        <dbReference type="ChEBI" id="CHEBI:15377"/>
        <dbReference type="ChEBI" id="CHEBI:76625"/>
        <dbReference type="ChEBI" id="CHEBI:84031"/>
    </reaction>
    <physiologicalReaction direction="left-to-right" evidence="6">
        <dbReference type="Rhea" id="RHEA:44045"/>
    </physiologicalReaction>
</comment>
<comment type="catalytic activity">
    <reaction evidence="3">
        <text>14,15-epoxy-(5Z,8Z,11Z)-eicosatrienoate + H2O = 14,15-dihydroxy-(5Z,8Z,11Z)-eicosatrienoate</text>
        <dbReference type="Rhea" id="RHEA:44040"/>
        <dbReference type="ChEBI" id="CHEBI:15377"/>
        <dbReference type="ChEBI" id="CHEBI:84024"/>
        <dbReference type="ChEBI" id="CHEBI:84029"/>
    </reaction>
    <physiologicalReaction direction="left-to-right" evidence="6">
        <dbReference type="Rhea" id="RHEA:44041"/>
    </physiologicalReaction>
</comment>
<comment type="catalytic activity">
    <reaction evidence="3">
        <text>12,13-epoxy-(9Z)-octadecenoate + H2O = 12,13-dihydroxy-(9Z)-octadecenoate</text>
        <dbReference type="Rhea" id="RHEA:44036"/>
        <dbReference type="ChEBI" id="CHEBI:15377"/>
        <dbReference type="ChEBI" id="CHEBI:84026"/>
        <dbReference type="ChEBI" id="CHEBI:84028"/>
    </reaction>
    <physiologicalReaction direction="left-to-right" evidence="6">
        <dbReference type="Rhea" id="RHEA:44037"/>
    </physiologicalReaction>
</comment>
<comment type="catalytic activity">
    <reaction evidence="3">
        <text>9,10-epoxy-(12Z)-octadecenoate + H2O = 9,10-dihydroxy-(12Z)-octadecenoate</text>
        <dbReference type="Rhea" id="RHEA:44032"/>
        <dbReference type="ChEBI" id="CHEBI:15377"/>
        <dbReference type="ChEBI" id="CHEBI:84023"/>
        <dbReference type="ChEBI" id="CHEBI:84027"/>
    </reaction>
    <physiologicalReaction direction="left-to-right" evidence="6">
        <dbReference type="Rhea" id="RHEA:44033"/>
    </physiologicalReaction>
</comment>
<comment type="biophysicochemical properties">
    <kinetics>
        <KM evidence="3">160 uM for trans-1,3-diphenylpropene oxide</KM>
        <KM evidence="3">11.4 uM for 12,13-epoxy-9-octadecenoate</KM>
        <KM evidence="3">7.5 uM for 9,10-epoxy-12-octadecenoate</KM>
        <text evidence="3">kcat is 12 sec(-1) with trans-1,3-diphenylpropene oxide as substrate. kcat is 0.11 sec(-1) with 12,13-epoxy-9-octadecenoate as substrate. kcat is 0.22 sec(-1) with 9,10-epoxy-12-octadecenoate as substrate.</text>
    </kinetics>
</comment>
<comment type="pathway">
    <text evidence="6">Lipid metabolism.</text>
</comment>
<comment type="subcellular location">
    <subcellularLocation>
        <location evidence="2">Membrane</location>
        <topology evidence="2">Single-pass membrane protein</topology>
    </subcellularLocation>
</comment>
<comment type="disruption phenotype">
    <text evidence="3">RNAi knockdown of both ceeh-1 and ceeh-2 results in the accumulation of 9,10-EpOME and 12,13-EpOME.</text>
</comment>
<comment type="similarity">
    <text evidence="5">Belongs to the AB hydrolase superfamily. Epoxide hydrolase family.</text>
</comment>
<dbReference type="EC" id="3.3.2.10" evidence="3"/>
<dbReference type="EMBL" id="EU151493">
    <property type="protein sequence ID" value="ABV45408.1"/>
    <property type="molecule type" value="mRNA"/>
</dbReference>
<dbReference type="EMBL" id="FO080195">
    <property type="protein sequence ID" value="CCD61875.1"/>
    <property type="molecule type" value="Genomic_DNA"/>
</dbReference>
<dbReference type="RefSeq" id="NP_497268.1">
    <property type="nucleotide sequence ID" value="NM_064867.7"/>
</dbReference>
<dbReference type="SMR" id="G5EBI4"/>
<dbReference type="FunCoup" id="G5EBI4">
    <property type="interactions" value="58"/>
</dbReference>
<dbReference type="STRING" id="6239.K02F3.6.1"/>
<dbReference type="SwissLipids" id="SLP:000001026"/>
<dbReference type="ESTHER" id="caeel-K02F3.6">
    <property type="family name" value="Epoxide_hydrolase"/>
</dbReference>
<dbReference type="PaxDb" id="6239-K02F3.6"/>
<dbReference type="PeptideAtlas" id="G5EBI4"/>
<dbReference type="EnsemblMetazoa" id="K02F3.6.1">
    <property type="protein sequence ID" value="K02F3.6.1"/>
    <property type="gene ID" value="WBGene00019329"/>
</dbReference>
<dbReference type="EnsemblMetazoa" id="K02F3.6.2">
    <property type="protein sequence ID" value="K02F3.6.2"/>
    <property type="gene ID" value="WBGene00019329"/>
</dbReference>
<dbReference type="GeneID" id="175239"/>
<dbReference type="KEGG" id="cel:CELE_K02F3.6"/>
<dbReference type="AGR" id="WB:WBGene00019329"/>
<dbReference type="CTD" id="175239"/>
<dbReference type="WormBase" id="K02F3.6">
    <property type="protein sequence ID" value="CE28941"/>
    <property type="gene ID" value="WBGene00019329"/>
    <property type="gene designation" value="ceeh-1"/>
</dbReference>
<dbReference type="eggNOG" id="KOG4178">
    <property type="taxonomic scope" value="Eukaryota"/>
</dbReference>
<dbReference type="HOGENOM" id="CLU_020336_7_3_1"/>
<dbReference type="InParanoid" id="G5EBI4"/>
<dbReference type="OMA" id="CHGFPGL"/>
<dbReference type="OrthoDB" id="408373at2759"/>
<dbReference type="PhylomeDB" id="G5EBI4"/>
<dbReference type="SABIO-RK" id="G5EBI4"/>
<dbReference type="PRO" id="PR:G5EBI4"/>
<dbReference type="Proteomes" id="UP000001940">
    <property type="component" value="Chromosome III"/>
</dbReference>
<dbReference type="Bgee" id="WBGene00019329">
    <property type="expression patterns" value="Expressed in material anatomical entity and 5 other cell types or tissues"/>
</dbReference>
<dbReference type="GO" id="GO:0016020">
    <property type="term" value="C:membrane"/>
    <property type="evidence" value="ECO:0007669"/>
    <property type="project" value="UniProtKB-SubCell"/>
</dbReference>
<dbReference type="GO" id="GO:0004301">
    <property type="term" value="F:epoxide hydrolase activity"/>
    <property type="evidence" value="ECO:0000314"/>
    <property type="project" value="WormBase"/>
</dbReference>
<dbReference type="GO" id="GO:0016787">
    <property type="term" value="F:hydrolase activity"/>
    <property type="evidence" value="ECO:0000318"/>
    <property type="project" value="GO_Central"/>
</dbReference>
<dbReference type="GO" id="GO:0006629">
    <property type="term" value="P:lipid metabolic process"/>
    <property type="evidence" value="ECO:0000314"/>
    <property type="project" value="WormBase"/>
</dbReference>
<dbReference type="Gene3D" id="3.40.50.1820">
    <property type="entry name" value="alpha/beta hydrolase"/>
    <property type="match status" value="1"/>
</dbReference>
<dbReference type="InterPro" id="IPR000073">
    <property type="entry name" value="AB_hydrolase_1"/>
</dbReference>
<dbReference type="InterPro" id="IPR029058">
    <property type="entry name" value="AB_hydrolase_fold"/>
</dbReference>
<dbReference type="InterPro" id="IPR000639">
    <property type="entry name" value="Epox_hydrolase-like"/>
</dbReference>
<dbReference type="PANTHER" id="PTHR43329">
    <property type="entry name" value="EPOXIDE HYDROLASE"/>
    <property type="match status" value="1"/>
</dbReference>
<dbReference type="Pfam" id="PF00561">
    <property type="entry name" value="Abhydrolase_1"/>
    <property type="match status" value="1"/>
</dbReference>
<dbReference type="PRINTS" id="PR00111">
    <property type="entry name" value="ABHYDROLASE"/>
</dbReference>
<dbReference type="PRINTS" id="PR00412">
    <property type="entry name" value="EPOXHYDRLASE"/>
</dbReference>
<dbReference type="SUPFAM" id="SSF53474">
    <property type="entry name" value="alpha/beta-Hydrolases"/>
    <property type="match status" value="1"/>
</dbReference>
<keyword id="KW-0378">Hydrolase</keyword>
<keyword id="KW-0443">Lipid metabolism</keyword>
<keyword id="KW-0472">Membrane</keyword>
<keyword id="KW-1185">Reference proteome</keyword>
<keyword id="KW-0812">Transmembrane</keyword>
<keyword id="KW-1133">Transmembrane helix</keyword>
<gene>
    <name evidence="9" type="primary">ceeh-1</name>
    <name evidence="9" type="ORF">K02F3.6</name>
</gene>
<reference evidence="7" key="1">
    <citation type="journal article" date="2008" name="Arch. Biochem. Biophys.">
        <title>Identification of two epoxide hydrolases in Caenorhabditis elegans that metabolize mammalian lipid signaling molecules.</title>
        <authorList>
            <person name="Harris T.R."/>
            <person name="Aronov P.A."/>
            <person name="Jones P.D."/>
            <person name="Tanaka H."/>
            <person name="Arand M."/>
            <person name="Hammock B.D."/>
        </authorList>
    </citation>
    <scope>NUCLEOTIDE SEQUENCE [MRNA]</scope>
    <scope>FUNCTION</scope>
    <scope>CATALYTIC ACTIVITY</scope>
    <scope>BIOPHYSICOCHEMICAL PROPERTIES</scope>
    <scope>PATHWAY</scope>
    <scope>DISRUPTION PHENOTYPE</scope>
</reference>
<reference evidence="8" key="2">
    <citation type="journal article" date="1998" name="Science">
        <title>Genome sequence of the nematode C. elegans: a platform for investigating biology.</title>
        <authorList>
            <consortium name="The C. elegans sequencing consortium"/>
        </authorList>
    </citation>
    <scope>NUCLEOTIDE SEQUENCE [LARGE SCALE GENOMIC DNA]</scope>
    <source>
        <strain evidence="8">Bristol N2</strain>
    </source>
</reference>
<accession>G5EBI4</accession>
<name>CEEH1_CAEEL</name>
<feature type="chain" id="PRO_0000432072" description="Epoxide hydrolase 1" evidence="5">
    <location>
        <begin position="1"/>
        <end position="404"/>
    </location>
</feature>
<feature type="transmembrane region" description="Helical" evidence="2">
    <location>
        <begin position="74"/>
        <end position="96"/>
    </location>
</feature>
<feature type="domain" description="AB hydrolase-1" evidence="2">
    <location>
        <begin position="140"/>
        <end position="389"/>
    </location>
</feature>
<feature type="active site" description="Nucleophile" evidence="1">
    <location>
        <position position="215"/>
    </location>
</feature>
<feature type="active site" description="Proton donor" evidence="1">
    <location>
        <position position="327"/>
    </location>
</feature>
<feature type="active site" description="Proton acceptor" evidence="1">
    <location>
        <position position="382"/>
    </location>
</feature>
<proteinExistence type="evidence at protein level"/>
<protein>
    <recommendedName>
        <fullName evidence="9">Epoxide hydrolase 1</fullName>
        <ecNumber evidence="3">3.3.2.10</ecNumber>
    </recommendedName>
    <alternativeName>
        <fullName evidence="4">CEEH1</fullName>
    </alternativeName>
</protein>
<sequence>MLFESIYIQCLNKFSKYKKFVCHTTCNCPNYKIIGYLLYFLCLCRPINCSLPLSRHDLAFGSFSYYLTMFLYRILVRLLQFYYFVKFSAILFLGFAVKGRSLFEKKQREKPNVLEGWDSRYIKLKKVRLHYVQTGSDDKPLMLFIHGYPEFWYSWRFQLKEFADKYRCVAIDQRGYNLSDKPKHVDNYSIDELTGDIRDVIEGLGYDKAIVVAHDWGGLVAWQFAEQYPEMVDKLICCNIPRPGSFRKRIYTSWSQFRKSWYMFFYQNEKIPEMLCSADDMKMLELCFRAKEIGIQNNKNFTDEDLEAWKYSFSMNGASFKYPINYYRNIFNAKKQQADLVLEMPTLIIWGTADGALDIEAAVDSLNTLKQGTMKKIEGASHWVQQDEPEMVNEHIKKFLNKYQ</sequence>
<organism evidence="8">
    <name type="scientific">Caenorhabditis elegans</name>
    <dbReference type="NCBI Taxonomy" id="6239"/>
    <lineage>
        <taxon>Eukaryota</taxon>
        <taxon>Metazoa</taxon>
        <taxon>Ecdysozoa</taxon>
        <taxon>Nematoda</taxon>
        <taxon>Chromadorea</taxon>
        <taxon>Rhabditida</taxon>
        <taxon>Rhabditina</taxon>
        <taxon>Rhabditomorpha</taxon>
        <taxon>Rhabditoidea</taxon>
        <taxon>Rhabditidae</taxon>
        <taxon>Peloderinae</taxon>
        <taxon>Caenorhabditis</taxon>
    </lineage>
</organism>